<feature type="chain" id="PRO_1000120997" description="Large ribosomal subunit protein uL10">
    <location>
        <begin position="1"/>
        <end position="175"/>
    </location>
</feature>
<evidence type="ECO:0000255" key="1">
    <source>
        <dbReference type="HAMAP-Rule" id="MF_00362"/>
    </source>
</evidence>
<evidence type="ECO:0000305" key="2"/>
<protein>
    <recommendedName>
        <fullName evidence="1">Large ribosomal subunit protein uL10</fullName>
    </recommendedName>
    <alternativeName>
        <fullName evidence="2">50S ribosomal protein L10</fullName>
    </alternativeName>
</protein>
<proteinExistence type="inferred from homology"/>
<keyword id="KW-1185">Reference proteome</keyword>
<keyword id="KW-0687">Ribonucleoprotein</keyword>
<keyword id="KW-0689">Ribosomal protein</keyword>
<keyword id="KW-0694">RNA-binding</keyword>
<keyword id="KW-0699">rRNA-binding</keyword>
<comment type="function">
    <text evidence="1">Forms part of the ribosomal stalk, playing a central role in the interaction of the ribosome with GTP-bound translation factors.</text>
</comment>
<comment type="subunit">
    <text evidence="1">Part of the ribosomal stalk of the 50S ribosomal subunit. The N-terminus interacts with L11 and the large rRNA to form the base of the stalk. The C-terminus forms an elongated spine to which L12 dimers bind in a sequential fashion forming a multimeric L10(L12)X complex.</text>
</comment>
<comment type="similarity">
    <text evidence="1">Belongs to the universal ribosomal protein uL10 family.</text>
</comment>
<gene>
    <name evidence="1" type="primary">rplJ</name>
    <name evidence="1" type="synonym">rpl10</name>
    <name type="ordered locus">P9211_02201</name>
</gene>
<sequence>MGRTLESKKQIVEELKALLDQAEMALVIDYQGLTIKEMSDLRTRLGPSSGICKVTKNTLMRKAIDGDTSWSSLESLLNGTNAFVLVKGDVGGALKAVQAFQKETKKSKTKGGLFEGKLLSQDEIKAIANLPTKEVLMAQIAGALNSIATKMAVGINEVPSGLARSLKQHADSGEN</sequence>
<reference key="1">
    <citation type="journal article" date="2007" name="PLoS Genet.">
        <title>Patterns and implications of gene gain and loss in the evolution of Prochlorococcus.</title>
        <authorList>
            <person name="Kettler G.C."/>
            <person name="Martiny A.C."/>
            <person name="Huang K."/>
            <person name="Zucker J."/>
            <person name="Coleman M.L."/>
            <person name="Rodrigue S."/>
            <person name="Chen F."/>
            <person name="Lapidus A."/>
            <person name="Ferriera S."/>
            <person name="Johnson J."/>
            <person name="Steglich C."/>
            <person name="Church G.M."/>
            <person name="Richardson P."/>
            <person name="Chisholm S.W."/>
        </authorList>
    </citation>
    <scope>NUCLEOTIDE SEQUENCE [LARGE SCALE GENOMIC DNA]</scope>
    <source>
        <strain>MIT 9211</strain>
    </source>
</reference>
<accession>A9BDG5</accession>
<dbReference type="EMBL" id="CP000878">
    <property type="protein sequence ID" value="ABX08151.1"/>
    <property type="molecule type" value="Genomic_DNA"/>
</dbReference>
<dbReference type="RefSeq" id="WP_012194776.1">
    <property type="nucleotide sequence ID" value="NC_009976.1"/>
</dbReference>
<dbReference type="SMR" id="A9BDG5"/>
<dbReference type="STRING" id="93059.P9211_02201"/>
<dbReference type="KEGG" id="pmj:P9211_02201"/>
<dbReference type="eggNOG" id="COG0244">
    <property type="taxonomic scope" value="Bacteria"/>
</dbReference>
<dbReference type="HOGENOM" id="CLU_092227_1_1_3"/>
<dbReference type="OrthoDB" id="9808307at2"/>
<dbReference type="Proteomes" id="UP000000788">
    <property type="component" value="Chromosome"/>
</dbReference>
<dbReference type="GO" id="GO:1990904">
    <property type="term" value="C:ribonucleoprotein complex"/>
    <property type="evidence" value="ECO:0007669"/>
    <property type="project" value="UniProtKB-KW"/>
</dbReference>
<dbReference type="GO" id="GO:0005840">
    <property type="term" value="C:ribosome"/>
    <property type="evidence" value="ECO:0007669"/>
    <property type="project" value="UniProtKB-KW"/>
</dbReference>
<dbReference type="GO" id="GO:0070180">
    <property type="term" value="F:large ribosomal subunit rRNA binding"/>
    <property type="evidence" value="ECO:0007669"/>
    <property type="project" value="UniProtKB-UniRule"/>
</dbReference>
<dbReference type="GO" id="GO:0006412">
    <property type="term" value="P:translation"/>
    <property type="evidence" value="ECO:0007669"/>
    <property type="project" value="UniProtKB-UniRule"/>
</dbReference>
<dbReference type="CDD" id="cd05797">
    <property type="entry name" value="Ribosomal_L10"/>
    <property type="match status" value="1"/>
</dbReference>
<dbReference type="Gene3D" id="3.30.70.1730">
    <property type="match status" value="1"/>
</dbReference>
<dbReference type="Gene3D" id="6.10.250.290">
    <property type="match status" value="1"/>
</dbReference>
<dbReference type="HAMAP" id="MF_00362">
    <property type="entry name" value="Ribosomal_uL10"/>
    <property type="match status" value="1"/>
</dbReference>
<dbReference type="InterPro" id="IPR001790">
    <property type="entry name" value="Ribosomal_uL10"/>
</dbReference>
<dbReference type="InterPro" id="IPR043141">
    <property type="entry name" value="Ribosomal_uL10-like_sf"/>
</dbReference>
<dbReference type="InterPro" id="IPR022973">
    <property type="entry name" value="Ribosomal_uL10_bac"/>
</dbReference>
<dbReference type="InterPro" id="IPR047865">
    <property type="entry name" value="Ribosomal_uL10_bac_type"/>
</dbReference>
<dbReference type="NCBIfam" id="NF000955">
    <property type="entry name" value="PRK00099.1-1"/>
    <property type="match status" value="1"/>
</dbReference>
<dbReference type="PANTHER" id="PTHR11560">
    <property type="entry name" value="39S RIBOSOMAL PROTEIN L10, MITOCHONDRIAL"/>
    <property type="match status" value="1"/>
</dbReference>
<dbReference type="Pfam" id="PF00466">
    <property type="entry name" value="Ribosomal_L10"/>
    <property type="match status" value="1"/>
</dbReference>
<dbReference type="SUPFAM" id="SSF160369">
    <property type="entry name" value="Ribosomal protein L10-like"/>
    <property type="match status" value="1"/>
</dbReference>
<organism>
    <name type="scientific">Prochlorococcus marinus (strain MIT 9211)</name>
    <dbReference type="NCBI Taxonomy" id="93059"/>
    <lineage>
        <taxon>Bacteria</taxon>
        <taxon>Bacillati</taxon>
        <taxon>Cyanobacteriota</taxon>
        <taxon>Cyanophyceae</taxon>
        <taxon>Synechococcales</taxon>
        <taxon>Prochlorococcaceae</taxon>
        <taxon>Prochlorococcus</taxon>
    </lineage>
</organism>
<name>RL10_PROM4</name>